<sequence length="195" mass="21685">MAAEDVVATGADPSELESGGLLHEIFTSPLNLLLLGLCIFLLYKIVRGDQPAASGDSDDDEPPPLPRLKRRDFTPAELRRFDGVQDPRILMAINGKVFDVTKGRKFYGPEGPYGVFAGRDASRGLATFCLDKEALKDEYDDLSDLTAAQQETLSDWESQFTFKYHHVGKLLKEGEEPTVYSDEEEPKDESARKND</sequence>
<keyword id="KW-0256">Endoplasmic reticulum</keyword>
<keyword id="KW-0325">Glycoprotein</keyword>
<keyword id="KW-0408">Iron</keyword>
<keyword id="KW-0446">Lipid-binding</keyword>
<keyword id="KW-0472">Membrane</keyword>
<keyword id="KW-0479">Metal-binding</keyword>
<keyword id="KW-0492">Microsome</keyword>
<keyword id="KW-0496">Mitochondrion</keyword>
<keyword id="KW-1000">Mitochondrion outer membrane</keyword>
<keyword id="KW-0597">Phosphoprotein</keyword>
<keyword id="KW-0654">Proteoglycan</keyword>
<keyword id="KW-0675">Receptor</keyword>
<keyword id="KW-1185">Reference proteome</keyword>
<keyword id="KW-0964">Secreted</keyword>
<keyword id="KW-0754">Steroid-binding</keyword>
<keyword id="KW-0812">Transmembrane</keyword>
<keyword id="KW-1133">Transmembrane helix</keyword>
<protein>
    <recommendedName>
        <fullName>Membrane-associated progesterone receptor component 1</fullName>
    </recommendedName>
</protein>
<comment type="function">
    <text evidence="2 3">Component of a progesterone-binding protein complex. Binds progesterone (By similarity). Has many reported cellular functions (heme homeostasis, interaction with CYPs). Required for the maintenance of uterine histoarchitecture and normal female reproductive lifespan (By similarity). Intracellular heme chaperone. Regulates heme synthesis via interactions with FECH and acts as a heme donor for at least some hemoproteins (By similarity). Forms a ternary complex with TMEM97 receptor and low density lipid receptor/LDLR, which increases LDLR-mediated LDL lipoprotein internalization (By similarity).</text>
</comment>
<comment type="subunit">
    <text evidence="2">Homodimer. Forms stable homodimer through hydrophobic heme-heme stacking interactions. Interacts with FECH; the interaction results in decreased FECH activity. Interacts with EGFR, CYP1A1 and CYP3A4; the interactions require PGRMC1 homodimerization. Interacts with TMEM97 and LDLR; the interaction increases LDL internalization.</text>
</comment>
<comment type="subcellular location">
    <subcellularLocation>
        <location evidence="4">Microsome membrane</location>
        <topology evidence="5">Single-pass membrane protein</topology>
    </subcellularLocation>
    <subcellularLocation>
        <location evidence="2">Smooth endoplasmic reticulum membrane</location>
        <topology evidence="5">Single-pass membrane protein</topology>
    </subcellularLocation>
    <subcellularLocation>
        <location evidence="3">Mitochondrion outer membrane</location>
        <topology evidence="2">Single-pass membrane protein</topology>
        <orientation evidence="3">Extracellular side</orientation>
    </subcellularLocation>
    <subcellularLocation>
        <location evidence="2">Secreted</location>
    </subcellularLocation>
</comment>
<comment type="domain">
    <text evidence="1">The cytochrome b5 heme-binding domain lacks the conserved iron-binding His residues at positions 107 and 131.</text>
</comment>
<comment type="PTM">
    <text evidence="2">O-glycosylated; contains chondroitin sulfate attached to Ser-54. Ser-54 is in the cytoplasmic domain but the glycosylated form was detected in urine, suggesting that the membrane-bound form is cleaved, allowing for production of a secreted form which is glycosylated.</text>
</comment>
<comment type="miscellaneous">
    <text evidence="2">Non-classical progesterone receptors involved in extranuclear signaling are classified in 2 groups: the class II progestin and adipoQ receptor (PAQR) family (also called mPRs) (PAQR5, PAQR6, PAQR7, PAQR8 and PAQR9) and the b5-like heme/steroid-binding protein family (also called MAPRs) (PGRMC1, PGRMC2, NENF and CYB5D2).</text>
</comment>
<comment type="similarity">
    <text evidence="7">Belongs to the cytochrome b5 family. MAPR subfamily.</text>
</comment>
<name>PGRC1_PONAB</name>
<evidence type="ECO:0000250" key="1"/>
<evidence type="ECO:0000250" key="2">
    <source>
        <dbReference type="UniProtKB" id="O00264"/>
    </source>
</evidence>
<evidence type="ECO:0000250" key="3">
    <source>
        <dbReference type="UniProtKB" id="O55022"/>
    </source>
</evidence>
<evidence type="ECO:0000250" key="4">
    <source>
        <dbReference type="UniProtKB" id="Q95250"/>
    </source>
</evidence>
<evidence type="ECO:0000255" key="5"/>
<evidence type="ECO:0000256" key="6">
    <source>
        <dbReference type="SAM" id="MobiDB-lite"/>
    </source>
</evidence>
<evidence type="ECO:0000305" key="7"/>
<organism>
    <name type="scientific">Pongo abelii</name>
    <name type="common">Sumatran orangutan</name>
    <name type="synonym">Pongo pygmaeus abelii</name>
    <dbReference type="NCBI Taxonomy" id="9601"/>
    <lineage>
        <taxon>Eukaryota</taxon>
        <taxon>Metazoa</taxon>
        <taxon>Chordata</taxon>
        <taxon>Craniata</taxon>
        <taxon>Vertebrata</taxon>
        <taxon>Euteleostomi</taxon>
        <taxon>Mammalia</taxon>
        <taxon>Eutheria</taxon>
        <taxon>Euarchontoglires</taxon>
        <taxon>Primates</taxon>
        <taxon>Haplorrhini</taxon>
        <taxon>Catarrhini</taxon>
        <taxon>Hominidae</taxon>
        <taxon>Pongo</taxon>
    </lineage>
</organism>
<reference key="1">
    <citation type="submission" date="2004-11" db="EMBL/GenBank/DDBJ databases">
        <authorList>
            <consortium name="The German cDNA consortium"/>
        </authorList>
    </citation>
    <scope>NUCLEOTIDE SEQUENCE [LARGE SCALE MRNA]</scope>
    <source>
        <tissue>Kidney</tissue>
    </source>
</reference>
<gene>
    <name type="primary">PGRMC1</name>
</gene>
<feature type="chain" id="PRO_0000253629" description="Membrane-associated progesterone receptor component 1">
    <location>
        <begin position="1"/>
        <end position="195"/>
    </location>
</feature>
<feature type="topological domain" description="Lumenal" evidence="5">
    <location>
        <begin position="1"/>
        <end position="24"/>
    </location>
</feature>
<feature type="transmembrane region" description="Helical" evidence="5">
    <location>
        <begin position="25"/>
        <end position="43"/>
    </location>
</feature>
<feature type="topological domain" description="Cytoplasmic" evidence="5">
    <location>
        <begin position="44"/>
        <end position="195"/>
    </location>
</feature>
<feature type="domain" description="Cytochrome b5 heme-binding">
    <location>
        <begin position="72"/>
        <end position="171"/>
    </location>
</feature>
<feature type="region of interest" description="Disordered" evidence="6">
    <location>
        <begin position="173"/>
        <end position="195"/>
    </location>
</feature>
<feature type="binding site" description="axial binding residue" evidence="2">
    <location>
        <position position="113"/>
    </location>
    <ligand>
        <name>heme</name>
        <dbReference type="ChEBI" id="CHEBI:30413"/>
    </ligand>
    <ligandPart>
        <name>Fe</name>
        <dbReference type="ChEBI" id="CHEBI:18248"/>
    </ligandPart>
</feature>
<feature type="modified residue" description="Phosphoserine" evidence="2">
    <location>
        <position position="54"/>
    </location>
</feature>
<feature type="modified residue" description="Phosphoserine" evidence="2">
    <location>
        <position position="57"/>
    </location>
</feature>
<feature type="modified residue" description="Phosphothreonine" evidence="2">
    <location>
        <position position="74"/>
    </location>
</feature>
<feature type="modified residue" description="Phosphoserine" evidence="2">
    <location>
        <position position="181"/>
    </location>
</feature>
<dbReference type="EMBL" id="CR857601">
    <property type="protein sequence ID" value="CAH89877.1"/>
    <property type="molecule type" value="mRNA"/>
</dbReference>
<dbReference type="RefSeq" id="NP_001127207.1">
    <property type="nucleotide sequence ID" value="NM_001133735.1"/>
</dbReference>
<dbReference type="SMR" id="Q5RED0"/>
<dbReference type="FunCoup" id="Q5RED0">
    <property type="interactions" value="2218"/>
</dbReference>
<dbReference type="STRING" id="9601.ENSPPYP00000023134"/>
<dbReference type="Ensembl" id="ENSPPYT00000024104.2">
    <property type="protein sequence ID" value="ENSPPYP00000023134.1"/>
    <property type="gene ID" value="ENSPPYG00000020666.2"/>
</dbReference>
<dbReference type="GeneID" id="100174262"/>
<dbReference type="KEGG" id="pon:100174262"/>
<dbReference type="CTD" id="10857"/>
<dbReference type="eggNOG" id="KOG1110">
    <property type="taxonomic scope" value="Eukaryota"/>
</dbReference>
<dbReference type="GeneTree" id="ENSGT00940000160619"/>
<dbReference type="HOGENOM" id="CLU_042860_1_0_1"/>
<dbReference type="InParanoid" id="Q5RED0"/>
<dbReference type="OMA" id="ANEWETQ"/>
<dbReference type="OrthoDB" id="547796at2759"/>
<dbReference type="TreeFam" id="TF314562"/>
<dbReference type="Proteomes" id="UP000001595">
    <property type="component" value="Chromosome X"/>
</dbReference>
<dbReference type="GO" id="GO:0005576">
    <property type="term" value="C:extracellular region"/>
    <property type="evidence" value="ECO:0007669"/>
    <property type="project" value="UniProtKB-SubCell"/>
</dbReference>
<dbReference type="GO" id="GO:0005741">
    <property type="term" value="C:mitochondrial outer membrane"/>
    <property type="evidence" value="ECO:0000250"/>
    <property type="project" value="UniProtKB"/>
</dbReference>
<dbReference type="GO" id="GO:0030868">
    <property type="term" value="C:smooth endoplasmic reticulum membrane"/>
    <property type="evidence" value="ECO:0007669"/>
    <property type="project" value="UniProtKB-SubCell"/>
</dbReference>
<dbReference type="GO" id="GO:0020037">
    <property type="term" value="F:heme binding"/>
    <property type="evidence" value="ECO:0000250"/>
    <property type="project" value="UniProtKB"/>
</dbReference>
<dbReference type="GO" id="GO:0046872">
    <property type="term" value="F:metal ion binding"/>
    <property type="evidence" value="ECO:0007669"/>
    <property type="project" value="UniProtKB-KW"/>
</dbReference>
<dbReference type="GO" id="GO:0042803">
    <property type="term" value="F:protein homodimerization activity"/>
    <property type="evidence" value="ECO:0000250"/>
    <property type="project" value="UniProtKB"/>
</dbReference>
<dbReference type="GO" id="GO:0005496">
    <property type="term" value="F:steroid binding"/>
    <property type="evidence" value="ECO:0007669"/>
    <property type="project" value="UniProtKB-KW"/>
</dbReference>
<dbReference type="GO" id="GO:0006783">
    <property type="term" value="P:heme biosynthetic process"/>
    <property type="evidence" value="ECO:0000250"/>
    <property type="project" value="UniProtKB"/>
</dbReference>
<dbReference type="GO" id="GO:0140077">
    <property type="term" value="P:positive regulation of lipoprotein transport"/>
    <property type="evidence" value="ECO:0000250"/>
    <property type="project" value="UniProtKB"/>
</dbReference>
<dbReference type="GO" id="GO:1903078">
    <property type="term" value="P:positive regulation of protein localization to plasma membrane"/>
    <property type="evidence" value="ECO:0007669"/>
    <property type="project" value="Ensembl"/>
</dbReference>
<dbReference type="FunFam" id="3.10.120.10:FF:000003">
    <property type="entry name" value="membrane-associated progesterone receptor component 1"/>
    <property type="match status" value="1"/>
</dbReference>
<dbReference type="Gene3D" id="3.10.120.10">
    <property type="entry name" value="Cytochrome b5-like heme/steroid binding domain"/>
    <property type="match status" value="1"/>
</dbReference>
<dbReference type="InterPro" id="IPR001199">
    <property type="entry name" value="Cyt_B5-like_heme/steroid-bd"/>
</dbReference>
<dbReference type="InterPro" id="IPR036400">
    <property type="entry name" value="Cyt_B5-like_heme/steroid_sf"/>
</dbReference>
<dbReference type="InterPro" id="IPR050577">
    <property type="entry name" value="MAPR/NEUFC/NENF-like"/>
</dbReference>
<dbReference type="PANTHER" id="PTHR10281:SF23">
    <property type="entry name" value="MEMBRANE-ASSOCIATED PROGESTERONE RECEPTOR COMPONENT 1"/>
    <property type="match status" value="1"/>
</dbReference>
<dbReference type="PANTHER" id="PTHR10281">
    <property type="entry name" value="MEMBRANE-ASSOCIATED PROGESTERONE RECEPTOR COMPONENT-RELATED"/>
    <property type="match status" value="1"/>
</dbReference>
<dbReference type="Pfam" id="PF00173">
    <property type="entry name" value="Cyt-b5"/>
    <property type="match status" value="1"/>
</dbReference>
<dbReference type="SMART" id="SM01117">
    <property type="entry name" value="Cyt-b5"/>
    <property type="match status" value="1"/>
</dbReference>
<dbReference type="SUPFAM" id="SSF55856">
    <property type="entry name" value="Cytochrome b5-like heme/steroid binding domain"/>
    <property type="match status" value="1"/>
</dbReference>
<proteinExistence type="evidence at transcript level"/>
<accession>Q5RED0</accession>